<sequence>MKTLLLTLVVVTIVCLDLGYTRTCLISPSSPPQTCPKGEDICIVKARCDEWCLRRGPLIERGCAATCPEFRSNYRSLLCCTTDNCNH</sequence>
<protein>
    <recommendedName>
        <fullName>Kappa-4-bungarotoxin</fullName>
    </recommendedName>
</protein>
<proteinExistence type="inferred from homology"/>
<keyword id="KW-0008">Acetylcholine receptor inhibiting toxin</keyword>
<keyword id="KW-1015">Disulfide bond</keyword>
<keyword id="KW-0872">Ion channel impairing toxin</keyword>
<keyword id="KW-0528">Neurotoxin</keyword>
<keyword id="KW-0629">Postsynaptic neurotoxin</keyword>
<keyword id="KW-0964">Secreted</keyword>
<keyword id="KW-0732">Signal</keyword>
<keyword id="KW-0800">Toxin</keyword>
<comment type="function">
    <text evidence="2">Postsynaptic neurotoxin that binds and inhibits neuronal nicotinic acetylcholine receptors (nAChR) with high affinity (IC(50)&lt;100 nM). Is a selective, and slowly reversible antagonist of alpha-3/CHRNA3-containing and some alpha-4/CHRNA4-containing AChRs.</text>
</comment>
<comment type="subunit">
    <text evidence="3">Homo- and heterodimer; non-covalently linked.</text>
</comment>
<comment type="subcellular location">
    <subcellularLocation>
        <location evidence="1">Secreted</location>
    </subcellularLocation>
</comment>
<comment type="tissue specificity">
    <text evidence="4">Expressed by the venom gland.</text>
</comment>
<comment type="similarity">
    <text evidence="4">Belongs to the three-finger toxin family. Long-chain subfamily. Kappa-neurotoxin sub-subfamily.</text>
</comment>
<reference key="1">
    <citation type="submission" date="1997-04" db="EMBL/GenBank/DDBJ databases">
        <authorList>
            <person name="Chang L.-S."/>
            <person name="Lin J."/>
        </authorList>
    </citation>
    <scope>NUCLEOTIDE SEQUENCE [MRNA]</scope>
    <source>
        <tissue>Venom gland</tissue>
    </source>
</reference>
<name>3LK4_BUNMU</name>
<evidence type="ECO:0000250" key="1"/>
<evidence type="ECO:0000250" key="2">
    <source>
        <dbReference type="UniProtKB" id="P01398"/>
    </source>
</evidence>
<evidence type="ECO:0000250" key="3">
    <source>
        <dbReference type="UniProtKB" id="P15816"/>
    </source>
</evidence>
<evidence type="ECO:0000305" key="4"/>
<feature type="signal peptide" evidence="1">
    <location>
        <begin position="1"/>
        <end position="21"/>
    </location>
</feature>
<feature type="chain" id="PRO_0000035413" description="Kappa-4-bungarotoxin">
    <location>
        <begin position="22"/>
        <end position="87"/>
    </location>
</feature>
<feature type="disulfide bond" evidence="2">
    <location>
        <begin position="24"/>
        <end position="42"/>
    </location>
</feature>
<feature type="disulfide bond" evidence="2">
    <location>
        <begin position="35"/>
        <end position="63"/>
    </location>
</feature>
<feature type="disulfide bond" evidence="2">
    <location>
        <begin position="48"/>
        <end position="52"/>
    </location>
</feature>
<feature type="disulfide bond" evidence="2">
    <location>
        <begin position="67"/>
        <end position="79"/>
    </location>
</feature>
<feature type="disulfide bond" evidence="2">
    <location>
        <begin position="80"/>
        <end position="85"/>
    </location>
</feature>
<dbReference type="EMBL" id="Y12265">
    <property type="protein sequence ID" value="CAA72939.1"/>
    <property type="molecule type" value="mRNA"/>
</dbReference>
<dbReference type="SMR" id="O12961"/>
<dbReference type="GO" id="GO:0005576">
    <property type="term" value="C:extracellular region"/>
    <property type="evidence" value="ECO:0007669"/>
    <property type="project" value="UniProtKB-SubCell"/>
</dbReference>
<dbReference type="GO" id="GO:0030550">
    <property type="term" value="F:acetylcholine receptor inhibitor activity"/>
    <property type="evidence" value="ECO:0007669"/>
    <property type="project" value="UniProtKB-KW"/>
</dbReference>
<dbReference type="GO" id="GO:0099106">
    <property type="term" value="F:ion channel regulator activity"/>
    <property type="evidence" value="ECO:0007669"/>
    <property type="project" value="UniProtKB-KW"/>
</dbReference>
<dbReference type="GO" id="GO:0090729">
    <property type="term" value="F:toxin activity"/>
    <property type="evidence" value="ECO:0007669"/>
    <property type="project" value="UniProtKB-KW"/>
</dbReference>
<dbReference type="CDD" id="cd00206">
    <property type="entry name" value="TFP_snake_toxin"/>
    <property type="match status" value="1"/>
</dbReference>
<dbReference type="Gene3D" id="2.10.60.10">
    <property type="entry name" value="CD59"/>
    <property type="match status" value="1"/>
</dbReference>
<dbReference type="InterPro" id="IPR003571">
    <property type="entry name" value="Snake_3FTx"/>
</dbReference>
<dbReference type="InterPro" id="IPR045860">
    <property type="entry name" value="Snake_toxin-like_sf"/>
</dbReference>
<dbReference type="InterPro" id="IPR018354">
    <property type="entry name" value="Snake_toxin_con_site"/>
</dbReference>
<dbReference type="InterPro" id="IPR054131">
    <property type="entry name" value="Toxin_cobra-type"/>
</dbReference>
<dbReference type="Pfam" id="PF21947">
    <property type="entry name" value="Toxin_cobra-type"/>
    <property type="match status" value="1"/>
</dbReference>
<dbReference type="SUPFAM" id="SSF57302">
    <property type="entry name" value="Snake toxin-like"/>
    <property type="match status" value="1"/>
</dbReference>
<dbReference type="PROSITE" id="PS00272">
    <property type="entry name" value="SNAKE_TOXIN"/>
    <property type="match status" value="1"/>
</dbReference>
<accession>O12961</accession>
<organism>
    <name type="scientific">Bungarus multicinctus</name>
    <name type="common">Many-banded krait</name>
    <dbReference type="NCBI Taxonomy" id="8616"/>
    <lineage>
        <taxon>Eukaryota</taxon>
        <taxon>Metazoa</taxon>
        <taxon>Chordata</taxon>
        <taxon>Craniata</taxon>
        <taxon>Vertebrata</taxon>
        <taxon>Euteleostomi</taxon>
        <taxon>Lepidosauria</taxon>
        <taxon>Squamata</taxon>
        <taxon>Bifurcata</taxon>
        <taxon>Unidentata</taxon>
        <taxon>Episquamata</taxon>
        <taxon>Toxicofera</taxon>
        <taxon>Serpentes</taxon>
        <taxon>Colubroidea</taxon>
        <taxon>Elapidae</taxon>
        <taxon>Bungarinae</taxon>
        <taxon>Bungarus</taxon>
    </lineage>
</organism>